<accession>C3MF51</accession>
<reference key="1">
    <citation type="journal article" date="2009" name="Appl. Environ. Microbiol.">
        <title>Rhizobium sp. strain NGR234 possesses a remarkable number of secretion systems.</title>
        <authorList>
            <person name="Schmeisser C."/>
            <person name="Liesegang H."/>
            <person name="Krysciak D."/>
            <person name="Bakkou N."/>
            <person name="Le Quere A."/>
            <person name="Wollherr A."/>
            <person name="Heinemeyer I."/>
            <person name="Morgenstern B."/>
            <person name="Pommerening-Roeser A."/>
            <person name="Flores M."/>
            <person name="Palacios R."/>
            <person name="Brenner S."/>
            <person name="Gottschalk G."/>
            <person name="Schmitz R.A."/>
            <person name="Broughton W.J."/>
            <person name="Perret X."/>
            <person name="Strittmatter A.W."/>
            <person name="Streit W.R."/>
        </authorList>
    </citation>
    <scope>NUCLEOTIDE SEQUENCE [LARGE SCALE GENOMIC DNA]</scope>
    <source>
        <strain>NBRC 101917 / NGR234</strain>
    </source>
</reference>
<protein>
    <recommendedName>
        <fullName evidence="1">Large ribosomal subunit protein bL34</fullName>
    </recommendedName>
    <alternativeName>
        <fullName evidence="3">50S ribosomal protein L34</fullName>
    </alternativeName>
</protein>
<gene>
    <name evidence="1" type="primary">rpmH</name>
    <name type="ordered locus">NGR_c00840</name>
</gene>
<proteinExistence type="inferred from homology"/>
<evidence type="ECO:0000255" key="1">
    <source>
        <dbReference type="HAMAP-Rule" id="MF_00391"/>
    </source>
</evidence>
<evidence type="ECO:0000256" key="2">
    <source>
        <dbReference type="SAM" id="MobiDB-lite"/>
    </source>
</evidence>
<evidence type="ECO:0000305" key="3"/>
<keyword id="KW-1185">Reference proteome</keyword>
<keyword id="KW-0687">Ribonucleoprotein</keyword>
<keyword id="KW-0689">Ribosomal protein</keyword>
<comment type="similarity">
    <text evidence="1">Belongs to the bacterial ribosomal protein bL34 family.</text>
</comment>
<name>RL34_SINFN</name>
<sequence>MKRTYQPSKLVRKRRHGFRARMSTKGGQKVLAARRARGRKRLSA</sequence>
<organism>
    <name type="scientific">Sinorhizobium fredii (strain NBRC 101917 / NGR234)</name>
    <dbReference type="NCBI Taxonomy" id="394"/>
    <lineage>
        <taxon>Bacteria</taxon>
        <taxon>Pseudomonadati</taxon>
        <taxon>Pseudomonadota</taxon>
        <taxon>Alphaproteobacteria</taxon>
        <taxon>Hyphomicrobiales</taxon>
        <taxon>Rhizobiaceae</taxon>
        <taxon>Sinorhizobium/Ensifer group</taxon>
        <taxon>Sinorhizobium</taxon>
    </lineage>
</organism>
<feature type="chain" id="PRO_1000196094" description="Large ribosomal subunit protein bL34">
    <location>
        <begin position="1"/>
        <end position="44"/>
    </location>
</feature>
<feature type="region of interest" description="Disordered" evidence="2">
    <location>
        <begin position="1"/>
        <end position="44"/>
    </location>
</feature>
<feature type="compositionally biased region" description="Basic residues" evidence="2">
    <location>
        <begin position="10"/>
        <end position="19"/>
    </location>
</feature>
<feature type="compositionally biased region" description="Basic residues" evidence="2">
    <location>
        <begin position="32"/>
        <end position="44"/>
    </location>
</feature>
<dbReference type="EMBL" id="CP001389">
    <property type="protein sequence ID" value="ACP23888.1"/>
    <property type="molecule type" value="Genomic_DNA"/>
</dbReference>
<dbReference type="RefSeq" id="WP_012706673.1">
    <property type="nucleotide sequence ID" value="NC_012587.1"/>
</dbReference>
<dbReference type="RefSeq" id="YP_002824641.1">
    <property type="nucleotide sequence ID" value="NC_012587.1"/>
</dbReference>
<dbReference type="SMR" id="C3MF51"/>
<dbReference type="STRING" id="394.NGR_c00840"/>
<dbReference type="GeneID" id="48971583"/>
<dbReference type="KEGG" id="rhi:NGR_c00840"/>
<dbReference type="PATRIC" id="fig|394.7.peg.2877"/>
<dbReference type="eggNOG" id="COG0230">
    <property type="taxonomic scope" value="Bacteria"/>
</dbReference>
<dbReference type="HOGENOM" id="CLU_129938_2_0_5"/>
<dbReference type="OrthoDB" id="9804164at2"/>
<dbReference type="Proteomes" id="UP000001054">
    <property type="component" value="Chromosome"/>
</dbReference>
<dbReference type="GO" id="GO:1990904">
    <property type="term" value="C:ribonucleoprotein complex"/>
    <property type="evidence" value="ECO:0007669"/>
    <property type="project" value="UniProtKB-KW"/>
</dbReference>
<dbReference type="GO" id="GO:0005840">
    <property type="term" value="C:ribosome"/>
    <property type="evidence" value="ECO:0007669"/>
    <property type="project" value="UniProtKB-KW"/>
</dbReference>
<dbReference type="GO" id="GO:0003735">
    <property type="term" value="F:structural constituent of ribosome"/>
    <property type="evidence" value="ECO:0007669"/>
    <property type="project" value="InterPro"/>
</dbReference>
<dbReference type="GO" id="GO:0006412">
    <property type="term" value="P:translation"/>
    <property type="evidence" value="ECO:0007669"/>
    <property type="project" value="UniProtKB-UniRule"/>
</dbReference>
<dbReference type="FunFam" id="1.10.287.3980:FF:000001">
    <property type="entry name" value="Mitochondrial ribosomal protein L34"/>
    <property type="match status" value="1"/>
</dbReference>
<dbReference type="Gene3D" id="1.10.287.3980">
    <property type="match status" value="1"/>
</dbReference>
<dbReference type="HAMAP" id="MF_00391">
    <property type="entry name" value="Ribosomal_bL34"/>
    <property type="match status" value="1"/>
</dbReference>
<dbReference type="InterPro" id="IPR000271">
    <property type="entry name" value="Ribosomal_bL34"/>
</dbReference>
<dbReference type="InterPro" id="IPR020939">
    <property type="entry name" value="Ribosomal_bL34_CS"/>
</dbReference>
<dbReference type="NCBIfam" id="TIGR01030">
    <property type="entry name" value="rpmH_bact"/>
    <property type="match status" value="1"/>
</dbReference>
<dbReference type="PANTHER" id="PTHR14503:SF4">
    <property type="entry name" value="LARGE RIBOSOMAL SUBUNIT PROTEIN BL34M"/>
    <property type="match status" value="1"/>
</dbReference>
<dbReference type="PANTHER" id="PTHR14503">
    <property type="entry name" value="MITOCHONDRIAL RIBOSOMAL PROTEIN 34 FAMILY MEMBER"/>
    <property type="match status" value="1"/>
</dbReference>
<dbReference type="Pfam" id="PF00468">
    <property type="entry name" value="Ribosomal_L34"/>
    <property type="match status" value="1"/>
</dbReference>
<dbReference type="PROSITE" id="PS00784">
    <property type="entry name" value="RIBOSOMAL_L34"/>
    <property type="match status" value="1"/>
</dbReference>